<organism>
    <name type="scientific">Danio rerio</name>
    <name type="common">Zebrafish</name>
    <name type="synonym">Brachydanio rerio</name>
    <dbReference type="NCBI Taxonomy" id="7955"/>
    <lineage>
        <taxon>Eukaryota</taxon>
        <taxon>Metazoa</taxon>
        <taxon>Chordata</taxon>
        <taxon>Craniata</taxon>
        <taxon>Vertebrata</taxon>
        <taxon>Euteleostomi</taxon>
        <taxon>Actinopterygii</taxon>
        <taxon>Neopterygii</taxon>
        <taxon>Teleostei</taxon>
        <taxon>Ostariophysi</taxon>
        <taxon>Cypriniformes</taxon>
        <taxon>Danionidae</taxon>
        <taxon>Danioninae</taxon>
        <taxon>Danio</taxon>
    </lineage>
</organism>
<reference key="1">
    <citation type="submission" date="1999-07" db="EMBL/GenBank/DDBJ databases">
        <title>Danio rerio vitamin D receptor.</title>
        <authorList>
            <person name="Kouzmenko A.P."/>
        </authorList>
    </citation>
    <scope>NUCLEOTIDE SEQUENCE [MRNA]</scope>
</reference>
<reference key="2">
    <citation type="submission" date="2008-04" db="EMBL/GenBank/DDBJ databases">
        <authorList>
            <consortium name="NIH - Zebrafish Gene Collection (ZGC) project"/>
        </authorList>
    </citation>
    <scope>NUCLEOTIDE SEQUENCE [LARGE SCALE MRNA]</scope>
</reference>
<reference key="3">
    <citation type="journal article" date="2007" name="PLoS Genet.">
        <title>Unexpected novel relational links uncovered by extensive developmental profiling of nuclear receptor expression.</title>
        <authorList>
            <person name="Bertrand S."/>
            <person name="Thisse B."/>
            <person name="Tavares R."/>
            <person name="Sachs L."/>
            <person name="Chaumot A."/>
            <person name="Bardet P.-L."/>
            <person name="Escriva H."/>
            <person name="Duffraisse M."/>
            <person name="Marchand O."/>
            <person name="Safi R."/>
            <person name="Thisse C."/>
            <person name="Laudet V."/>
        </authorList>
    </citation>
    <scope>TISSUE SPECIFICITY</scope>
</reference>
<reference evidence="9" key="4">
    <citation type="journal article" date="2007" name="Arch. Biochem. Biophys.">
        <title>Crystal structure of the vitamin D nuclear receptor ligand binding domain in complex with a locked side chain analog of calcitriol.</title>
        <authorList>
            <person name="Rochel N."/>
            <person name="Hourai S."/>
            <person name="Perez-Garcia X."/>
            <person name="Rumbo A."/>
            <person name="Mourino A."/>
            <person name="Moras D."/>
        </authorList>
    </citation>
    <scope>X-RAY CRYSTALLOGRAPHY (2.65 ANGSTROMS) OF 156-453 IN COMPLEX WITH VITAMIN D3 ANALOG AND NCOA1</scope>
    <scope>IDENTIFICATION BY MASS SPECTROMETRY</scope>
</reference>
<reference evidence="10 11" key="5">
    <citation type="journal article" date="2007" name="J. Steroid Biochem. Mol. Biol.">
        <title>Adaptability of the vitamin D nuclear receptor to the synthetic ligand Gemini: remodelling the LBP with one side chain rotation.</title>
        <authorList>
            <person name="Ciesielski F."/>
            <person name="Rochel N."/>
            <person name="Moras D."/>
        </authorList>
    </citation>
    <scope>X-RAY CRYSTALLOGRAPHY (2.2 ANGSTROMS) OF 156-453 IN COMPLEXES WITH CALCITRIOL; VITAMIN D3 ANALOG AND NCOA1</scope>
    <scope>FUNCTION</scope>
    <scope>INTERACTION WITH NCOA1</scope>
    <scope>IDENTIFICATION BY MASS SPECTROMETRY</scope>
</reference>
<gene>
    <name type="primary">vdra</name>
    <name type="synonym">nr1i1a</name>
    <name type="synonym">vdr</name>
</gene>
<dbReference type="EMBL" id="AF164512">
    <property type="protein sequence ID" value="AAF21427.1"/>
    <property type="molecule type" value="mRNA"/>
</dbReference>
<dbReference type="EMBL" id="BC162213">
    <property type="protein sequence ID" value="AAI62213.1"/>
    <property type="molecule type" value="mRNA"/>
</dbReference>
<dbReference type="EMBL" id="BC162226">
    <property type="protein sequence ID" value="AAI62226.1"/>
    <property type="molecule type" value="mRNA"/>
</dbReference>
<dbReference type="RefSeq" id="NP_570994.1">
    <property type="nucleotide sequence ID" value="NM_130919.1"/>
</dbReference>
<dbReference type="PDB" id="2HBH">
    <property type="method" value="X-ray"/>
    <property type="resolution" value="2.65 A"/>
    <property type="chains" value="A=156-453"/>
</dbReference>
<dbReference type="PDB" id="2HC4">
    <property type="method" value="X-ray"/>
    <property type="resolution" value="2.20 A"/>
    <property type="chains" value="A=156-453"/>
</dbReference>
<dbReference type="PDB" id="2HCD">
    <property type="method" value="X-ray"/>
    <property type="resolution" value="2.60 A"/>
    <property type="chains" value="A=156-453"/>
</dbReference>
<dbReference type="PDB" id="3DR1">
    <property type="method" value="X-ray"/>
    <property type="resolution" value="2.70 A"/>
    <property type="chains" value="A=156-453"/>
</dbReference>
<dbReference type="PDB" id="3O1D">
    <property type="method" value="X-ray"/>
    <property type="resolution" value="2.40 A"/>
    <property type="chains" value="A=156-453"/>
</dbReference>
<dbReference type="PDB" id="3O1E">
    <property type="method" value="X-ray"/>
    <property type="resolution" value="2.50 A"/>
    <property type="chains" value="A=156-453"/>
</dbReference>
<dbReference type="PDB" id="4FHH">
    <property type="method" value="X-ray"/>
    <property type="resolution" value="2.33 A"/>
    <property type="chains" value="A=156-453"/>
</dbReference>
<dbReference type="PDB" id="4FHI">
    <property type="method" value="X-ray"/>
    <property type="resolution" value="2.40 A"/>
    <property type="chains" value="A=156-453"/>
</dbReference>
<dbReference type="PDB" id="4G1D">
    <property type="method" value="X-ray"/>
    <property type="resolution" value="2.90 A"/>
    <property type="chains" value="A=156-453"/>
</dbReference>
<dbReference type="PDB" id="4G1Y">
    <property type="method" value="X-ray"/>
    <property type="resolution" value="2.85 A"/>
    <property type="chains" value="A=156-453"/>
</dbReference>
<dbReference type="PDB" id="4G1Z">
    <property type="method" value="X-ray"/>
    <property type="resolution" value="2.50 A"/>
    <property type="chains" value="A=156-453"/>
</dbReference>
<dbReference type="PDB" id="4G20">
    <property type="method" value="X-ray"/>
    <property type="resolution" value="2.90 A"/>
    <property type="chains" value="A=156-453"/>
</dbReference>
<dbReference type="PDB" id="4G21">
    <property type="method" value="X-ray"/>
    <property type="resolution" value="2.90 A"/>
    <property type="chains" value="A=156-453"/>
</dbReference>
<dbReference type="PDB" id="4G2H">
    <property type="method" value="X-ray"/>
    <property type="resolution" value="2.50 A"/>
    <property type="chains" value="A=156-453"/>
</dbReference>
<dbReference type="PDB" id="4IA1">
    <property type="method" value="X-ray"/>
    <property type="resolution" value="2.44 A"/>
    <property type="chains" value="A=156-453"/>
</dbReference>
<dbReference type="PDB" id="4IA2">
    <property type="method" value="X-ray"/>
    <property type="resolution" value="2.95 A"/>
    <property type="chains" value="A=156-453"/>
</dbReference>
<dbReference type="PDB" id="4IA3">
    <property type="method" value="X-ray"/>
    <property type="resolution" value="2.70 A"/>
    <property type="chains" value="A=156-453"/>
</dbReference>
<dbReference type="PDB" id="4IA7">
    <property type="method" value="X-ray"/>
    <property type="resolution" value="2.70 A"/>
    <property type="chains" value="A=156-453"/>
</dbReference>
<dbReference type="PDB" id="4Q0A">
    <property type="method" value="X-ray"/>
    <property type="resolution" value="1.90 A"/>
    <property type="chains" value="C=156-453"/>
</dbReference>
<dbReference type="PDB" id="4RUJ">
    <property type="method" value="X-ray"/>
    <property type="resolution" value="2.35 A"/>
    <property type="chains" value="A=156-453"/>
</dbReference>
<dbReference type="PDB" id="4RUO">
    <property type="method" value="X-ray"/>
    <property type="resolution" value="2.81 A"/>
    <property type="chains" value="X=156-453"/>
</dbReference>
<dbReference type="PDB" id="4RUP">
    <property type="method" value="X-ray"/>
    <property type="resolution" value="2.75 A"/>
    <property type="chains" value="A=156-453"/>
</dbReference>
<dbReference type="PDB" id="5E7V">
    <property type="method" value="X-ray"/>
    <property type="resolution" value="2.40 A"/>
    <property type="chains" value="A=156-453"/>
</dbReference>
<dbReference type="PDB" id="5LGA">
    <property type="method" value="X-ray"/>
    <property type="resolution" value="2.50 A"/>
    <property type="chains" value="A=156-453"/>
</dbReference>
<dbReference type="PDB" id="5MX7">
    <property type="method" value="X-ray"/>
    <property type="resolution" value="1.98 A"/>
    <property type="chains" value="A1=156-453"/>
</dbReference>
<dbReference type="PDB" id="5NKY">
    <property type="method" value="X-ray"/>
    <property type="resolution" value="2.10 A"/>
    <property type="chains" value="A=156-453"/>
</dbReference>
<dbReference type="PDB" id="5NMA">
    <property type="method" value="X-ray"/>
    <property type="resolution" value="2.80 A"/>
    <property type="chains" value="A=156-453"/>
</dbReference>
<dbReference type="PDB" id="5NMB">
    <property type="method" value="X-ray"/>
    <property type="resolution" value="2.50 A"/>
    <property type="chains" value="A2=156-453"/>
</dbReference>
<dbReference type="PDB" id="5OW7">
    <property type="method" value="X-ray"/>
    <property type="resolution" value="2.10 A"/>
    <property type="chains" value="A=156-453"/>
</dbReference>
<dbReference type="PDB" id="5OW9">
    <property type="method" value="X-ray"/>
    <property type="resolution" value="2.40 A"/>
    <property type="chains" value="A=156-453"/>
</dbReference>
<dbReference type="PDB" id="5OWD">
    <property type="method" value="X-ray"/>
    <property type="resolution" value="2.15 A"/>
    <property type="chains" value="A=156-453"/>
</dbReference>
<dbReference type="PDB" id="6FO7">
    <property type="method" value="X-ray"/>
    <property type="resolution" value="2.59 A"/>
    <property type="chains" value="A=156-453"/>
</dbReference>
<dbReference type="PDB" id="6FO8">
    <property type="method" value="X-ray"/>
    <property type="resolution" value="2.30 A"/>
    <property type="chains" value="1=156-453"/>
</dbReference>
<dbReference type="PDB" id="6FO9">
    <property type="method" value="X-ray"/>
    <property type="resolution" value="2.70 A"/>
    <property type="chains" value="A=156-453"/>
</dbReference>
<dbReference type="PDB" id="6FOB">
    <property type="method" value="X-ray"/>
    <property type="resolution" value="2.75 A"/>
    <property type="chains" value="A=156-453"/>
</dbReference>
<dbReference type="PDB" id="6FOD">
    <property type="method" value="X-ray"/>
    <property type="resolution" value="2.50 A"/>
    <property type="chains" value="A=156-453"/>
</dbReference>
<dbReference type="PDB" id="6T2M">
    <property type="method" value="X-ray"/>
    <property type="resolution" value="3.00 A"/>
    <property type="chains" value="A=156-453"/>
</dbReference>
<dbReference type="PDB" id="6XZH">
    <property type="method" value="X-ray"/>
    <property type="resolution" value="2.37 A"/>
    <property type="chains" value="A=156-453"/>
</dbReference>
<dbReference type="PDB" id="6XZI">
    <property type="method" value="X-ray"/>
    <property type="resolution" value="2.10 A"/>
    <property type="chains" value="A=156-453"/>
</dbReference>
<dbReference type="PDB" id="6XZJ">
    <property type="method" value="X-ray"/>
    <property type="resolution" value="2.10 A"/>
    <property type="chains" value="A=156-453"/>
</dbReference>
<dbReference type="PDB" id="6XZK">
    <property type="method" value="X-ray"/>
    <property type="resolution" value="2.00 A"/>
    <property type="chains" value="A=156-453"/>
</dbReference>
<dbReference type="PDB" id="6XZV">
    <property type="method" value="X-ray"/>
    <property type="resolution" value="2.30 A"/>
    <property type="chains" value="A=156-453"/>
</dbReference>
<dbReference type="PDB" id="7B39">
    <property type="method" value="X-ray"/>
    <property type="resolution" value="2.13 A"/>
    <property type="chains" value="A=156-453"/>
</dbReference>
<dbReference type="PDB" id="7BNS">
    <property type="method" value="X-ray"/>
    <property type="resolution" value="2.70 A"/>
    <property type="chains" value="A2=156-453"/>
</dbReference>
<dbReference type="PDB" id="7BNU">
    <property type="method" value="X-ray"/>
    <property type="resolution" value="2.40 A"/>
    <property type="chains" value="A2=156-453"/>
</dbReference>
<dbReference type="PDB" id="7BO6">
    <property type="method" value="X-ray"/>
    <property type="resolution" value="2.86 A"/>
    <property type="chains" value="A=156-453"/>
</dbReference>
<dbReference type="PDB" id="7OXU">
    <property type="method" value="X-ray"/>
    <property type="resolution" value="2.39 A"/>
    <property type="chains" value="A=156-453"/>
</dbReference>
<dbReference type="PDB" id="7OXZ">
    <property type="method" value="X-ray"/>
    <property type="resolution" value="2.20 A"/>
    <property type="chains" value="A=156-453"/>
</dbReference>
<dbReference type="PDB" id="7OY4">
    <property type="method" value="X-ray"/>
    <property type="resolution" value="2.00 A"/>
    <property type="chains" value="A=156-453"/>
</dbReference>
<dbReference type="PDB" id="7ZFG">
    <property type="method" value="X-ray"/>
    <property type="resolution" value="2.62 A"/>
    <property type="chains" value="A=156-453"/>
</dbReference>
<dbReference type="PDB" id="7ZFX">
    <property type="method" value="X-ray"/>
    <property type="resolution" value="2.60 A"/>
    <property type="chains" value="A=156-453"/>
</dbReference>
<dbReference type="PDB" id="8CK5">
    <property type="method" value="X-ray"/>
    <property type="resolution" value="2.10 A"/>
    <property type="chains" value="A=156-453"/>
</dbReference>
<dbReference type="PDB" id="8CKC">
    <property type="method" value="X-ray"/>
    <property type="resolution" value="2.10 A"/>
    <property type="chains" value="A=156-453"/>
</dbReference>
<dbReference type="PDB" id="8P9W">
    <property type="method" value="X-ray"/>
    <property type="resolution" value="2.90 A"/>
    <property type="chains" value="A=156-453"/>
</dbReference>
<dbReference type="PDB" id="8P9X">
    <property type="method" value="X-ray"/>
    <property type="resolution" value="2.15 A"/>
    <property type="chains" value="A=156-453"/>
</dbReference>
<dbReference type="PDB" id="8PWD">
    <property type="method" value="X-ray"/>
    <property type="resolution" value="2.80 A"/>
    <property type="chains" value="A=156-453"/>
</dbReference>
<dbReference type="PDB" id="8PWE">
    <property type="method" value="X-ray"/>
    <property type="resolution" value="2.00 A"/>
    <property type="chains" value="A=156-453"/>
</dbReference>
<dbReference type="PDB" id="8PWF">
    <property type="method" value="X-ray"/>
    <property type="resolution" value="2.30 A"/>
    <property type="chains" value="A=156-453"/>
</dbReference>
<dbReference type="PDB" id="8PWM">
    <property type="method" value="X-ray"/>
    <property type="resolution" value="2.30 A"/>
    <property type="chains" value="A=156-453"/>
</dbReference>
<dbReference type="PDB" id="8PZ6">
    <property type="method" value="X-ray"/>
    <property type="resolution" value="2.90 A"/>
    <property type="chains" value="A=156-453"/>
</dbReference>
<dbReference type="PDB" id="8PZ7">
    <property type="method" value="X-ray"/>
    <property type="resolution" value="2.93 A"/>
    <property type="chains" value="A=156-453"/>
</dbReference>
<dbReference type="PDB" id="8PZ8">
    <property type="method" value="X-ray"/>
    <property type="resolution" value="2.64 A"/>
    <property type="chains" value="A=156-453"/>
</dbReference>
<dbReference type="PDB" id="8PZ9">
    <property type="method" value="X-ray"/>
    <property type="resolution" value="2.74 A"/>
    <property type="chains" value="A=156-453"/>
</dbReference>
<dbReference type="PDB" id="8PZB">
    <property type="method" value="X-ray"/>
    <property type="resolution" value="2.73 A"/>
    <property type="chains" value="A=156-453"/>
</dbReference>
<dbReference type="PDB" id="9EYR">
    <property type="method" value="X-ray"/>
    <property type="resolution" value="2.56 A"/>
    <property type="chains" value="A=156-453"/>
</dbReference>
<dbReference type="PDB" id="9EZ1">
    <property type="method" value="X-ray"/>
    <property type="resolution" value="1.95 A"/>
    <property type="chains" value="A=156-453"/>
</dbReference>
<dbReference type="PDB" id="9EZ2">
    <property type="method" value="X-ray"/>
    <property type="resolution" value="1.80 A"/>
    <property type="chains" value="A=156-453"/>
</dbReference>
<dbReference type="PDB" id="9FBF">
    <property type="method" value="X-ray"/>
    <property type="resolution" value="3.01 A"/>
    <property type="chains" value="A=156-453"/>
</dbReference>
<dbReference type="PDB" id="9GY8">
    <property type="method" value="X-ray"/>
    <property type="resolution" value="2.20 A"/>
    <property type="chains" value="A=156-453"/>
</dbReference>
<dbReference type="PDB" id="9GYA">
    <property type="method" value="X-ray"/>
    <property type="resolution" value="1.85 A"/>
    <property type="chains" value="A=156-453"/>
</dbReference>
<dbReference type="PDB" id="9GYC">
    <property type="method" value="X-ray"/>
    <property type="resolution" value="2.20 A"/>
    <property type="chains" value="A=156-453"/>
</dbReference>
<dbReference type="PDB" id="9GYJ">
    <property type="method" value="X-ray"/>
    <property type="resolution" value="1.90 A"/>
    <property type="chains" value="A=156-453"/>
</dbReference>
<dbReference type="PDB" id="9GYK">
    <property type="method" value="X-ray"/>
    <property type="resolution" value="2.20 A"/>
    <property type="chains" value="A=156-453"/>
</dbReference>
<dbReference type="PDBsum" id="2HBH"/>
<dbReference type="PDBsum" id="2HC4"/>
<dbReference type="PDBsum" id="2HCD"/>
<dbReference type="PDBsum" id="3DR1"/>
<dbReference type="PDBsum" id="3O1D"/>
<dbReference type="PDBsum" id="3O1E"/>
<dbReference type="PDBsum" id="4FHH"/>
<dbReference type="PDBsum" id="4FHI"/>
<dbReference type="PDBsum" id="4G1D"/>
<dbReference type="PDBsum" id="4G1Y"/>
<dbReference type="PDBsum" id="4G1Z"/>
<dbReference type="PDBsum" id="4G20"/>
<dbReference type="PDBsum" id="4G21"/>
<dbReference type="PDBsum" id="4G2H"/>
<dbReference type="PDBsum" id="4IA1"/>
<dbReference type="PDBsum" id="4IA2"/>
<dbReference type="PDBsum" id="4IA3"/>
<dbReference type="PDBsum" id="4IA7"/>
<dbReference type="PDBsum" id="4Q0A"/>
<dbReference type="PDBsum" id="4RUJ"/>
<dbReference type="PDBsum" id="4RUO"/>
<dbReference type="PDBsum" id="4RUP"/>
<dbReference type="PDBsum" id="5E7V"/>
<dbReference type="PDBsum" id="5LGA"/>
<dbReference type="PDBsum" id="5MX7"/>
<dbReference type="PDBsum" id="5NKY"/>
<dbReference type="PDBsum" id="5NMA"/>
<dbReference type="PDBsum" id="5NMB"/>
<dbReference type="PDBsum" id="5OW7"/>
<dbReference type="PDBsum" id="5OW9"/>
<dbReference type="PDBsum" id="5OWD"/>
<dbReference type="PDBsum" id="6FO7"/>
<dbReference type="PDBsum" id="6FO8"/>
<dbReference type="PDBsum" id="6FO9"/>
<dbReference type="PDBsum" id="6FOB"/>
<dbReference type="PDBsum" id="6FOD"/>
<dbReference type="PDBsum" id="6T2M"/>
<dbReference type="PDBsum" id="6XZH"/>
<dbReference type="PDBsum" id="6XZI"/>
<dbReference type="PDBsum" id="6XZJ"/>
<dbReference type="PDBsum" id="6XZK"/>
<dbReference type="PDBsum" id="6XZV"/>
<dbReference type="PDBsum" id="7B39"/>
<dbReference type="PDBsum" id="7BNS"/>
<dbReference type="PDBsum" id="7BNU"/>
<dbReference type="PDBsum" id="7BO6"/>
<dbReference type="PDBsum" id="7OXU"/>
<dbReference type="PDBsum" id="7OXZ"/>
<dbReference type="PDBsum" id="7OY4"/>
<dbReference type="PDBsum" id="7ZFG"/>
<dbReference type="PDBsum" id="7ZFX"/>
<dbReference type="PDBsum" id="8CK5"/>
<dbReference type="PDBsum" id="8CKC"/>
<dbReference type="PDBsum" id="8P9W"/>
<dbReference type="PDBsum" id="8P9X"/>
<dbReference type="PDBsum" id="8PWD"/>
<dbReference type="PDBsum" id="8PWE"/>
<dbReference type="PDBsum" id="8PWF"/>
<dbReference type="PDBsum" id="8PWM"/>
<dbReference type="PDBsum" id="8PZ6"/>
<dbReference type="PDBsum" id="8PZ7"/>
<dbReference type="PDBsum" id="8PZ8"/>
<dbReference type="PDBsum" id="8PZ9"/>
<dbReference type="PDBsum" id="8PZB"/>
<dbReference type="PDBsum" id="9EYR"/>
<dbReference type="PDBsum" id="9EZ1"/>
<dbReference type="PDBsum" id="9EZ2"/>
<dbReference type="PDBsum" id="9FBF"/>
<dbReference type="PDBsum" id="9GY8"/>
<dbReference type="PDBsum" id="9GYA"/>
<dbReference type="PDBsum" id="9GYC"/>
<dbReference type="PDBsum" id="9GYJ"/>
<dbReference type="PDBsum" id="9GYK"/>
<dbReference type="SMR" id="Q9PTN2"/>
<dbReference type="BioGRID" id="78317">
    <property type="interactions" value="2"/>
</dbReference>
<dbReference type="FunCoup" id="Q9PTN2">
    <property type="interactions" value="1107"/>
</dbReference>
<dbReference type="BindingDB" id="Q9PTN2"/>
<dbReference type="ChEMBL" id="CHEMBL3217399"/>
<dbReference type="DrugCentral" id="Q9PTN2"/>
<dbReference type="PaxDb" id="7955-ENSDARP00000063213"/>
<dbReference type="GeneID" id="30076"/>
<dbReference type="KEGG" id="dre:30076"/>
<dbReference type="AGR" id="ZFIN:ZDB-GENE-000210-31"/>
<dbReference type="CTD" id="30076"/>
<dbReference type="ZFIN" id="ZDB-GENE-000210-31">
    <property type="gene designation" value="vdra"/>
</dbReference>
<dbReference type="eggNOG" id="KOG3575">
    <property type="taxonomic scope" value="Eukaryota"/>
</dbReference>
<dbReference type="InParanoid" id="Q9PTN2"/>
<dbReference type="OrthoDB" id="6352325at2759"/>
<dbReference type="PhylomeDB" id="Q9PTN2"/>
<dbReference type="Reactome" id="R-DRE-196791">
    <property type="pathway name" value="Vitamin D (calciferol) metabolism"/>
</dbReference>
<dbReference type="Reactome" id="R-DRE-4090294">
    <property type="pathway name" value="SUMOylation of intracellular receptors"/>
</dbReference>
<dbReference type="EvolutionaryTrace" id="Q9PTN2"/>
<dbReference type="PRO" id="PR:Q9PTN2"/>
<dbReference type="Proteomes" id="UP000000437">
    <property type="component" value="Chromosome 23"/>
</dbReference>
<dbReference type="GO" id="GO:0005737">
    <property type="term" value="C:cytoplasm"/>
    <property type="evidence" value="ECO:0007669"/>
    <property type="project" value="UniProtKB-SubCell"/>
</dbReference>
<dbReference type="GO" id="GO:0005634">
    <property type="term" value="C:nucleus"/>
    <property type="evidence" value="ECO:0000318"/>
    <property type="project" value="GO_Central"/>
</dbReference>
<dbReference type="GO" id="GO:1902098">
    <property type="term" value="F:calcitriol binding"/>
    <property type="evidence" value="ECO:0000314"/>
    <property type="project" value="ZFIN"/>
</dbReference>
<dbReference type="GO" id="GO:1902121">
    <property type="term" value="F:lithocholic acid binding"/>
    <property type="evidence" value="ECO:0000314"/>
    <property type="project" value="ZFIN"/>
</dbReference>
<dbReference type="GO" id="GO:0004879">
    <property type="term" value="F:nuclear receptor activity"/>
    <property type="evidence" value="ECO:0000314"/>
    <property type="project" value="ZFIN"/>
</dbReference>
<dbReference type="GO" id="GO:0000978">
    <property type="term" value="F:RNA polymerase II cis-regulatory region sequence-specific DNA binding"/>
    <property type="evidence" value="ECO:0000318"/>
    <property type="project" value="GO_Central"/>
</dbReference>
<dbReference type="GO" id="GO:0005499">
    <property type="term" value="F:vitamin D binding"/>
    <property type="evidence" value="ECO:0000314"/>
    <property type="project" value="ZFIN"/>
</dbReference>
<dbReference type="GO" id="GO:0008270">
    <property type="term" value="F:zinc ion binding"/>
    <property type="evidence" value="ECO:0007669"/>
    <property type="project" value="UniProtKB-KW"/>
</dbReference>
<dbReference type="GO" id="GO:0055074">
    <property type="term" value="P:calcium ion homeostasis"/>
    <property type="evidence" value="ECO:0000315"/>
    <property type="project" value="ZFIN"/>
</dbReference>
<dbReference type="GO" id="GO:0030154">
    <property type="term" value="P:cell differentiation"/>
    <property type="evidence" value="ECO:0000318"/>
    <property type="project" value="GO_Central"/>
</dbReference>
<dbReference type="GO" id="GO:0006351">
    <property type="term" value="P:DNA-templated transcription"/>
    <property type="evidence" value="ECO:0000314"/>
    <property type="project" value="ZFIN"/>
</dbReference>
<dbReference type="GO" id="GO:0003146">
    <property type="term" value="P:heart jogging"/>
    <property type="evidence" value="ECO:0000315"/>
    <property type="project" value="ZFIN"/>
</dbReference>
<dbReference type="GO" id="GO:0001947">
    <property type="term" value="P:heart looping"/>
    <property type="evidence" value="ECO:0000315"/>
    <property type="project" value="ZFIN"/>
</dbReference>
<dbReference type="GO" id="GO:0071425">
    <property type="term" value="P:hematopoietic stem cell proliferation"/>
    <property type="evidence" value="ECO:0000315"/>
    <property type="project" value="ZFIN"/>
</dbReference>
<dbReference type="GO" id="GO:0030522">
    <property type="term" value="P:intracellular receptor signaling pathway"/>
    <property type="evidence" value="ECO:0000318"/>
    <property type="project" value="GO_Central"/>
</dbReference>
<dbReference type="GO" id="GO:0000122">
    <property type="term" value="P:negative regulation of transcription by RNA polymerase II"/>
    <property type="evidence" value="ECO:0000318"/>
    <property type="project" value="GO_Central"/>
</dbReference>
<dbReference type="GO" id="GO:0001503">
    <property type="term" value="P:ossification"/>
    <property type="evidence" value="ECO:0000315"/>
    <property type="project" value="ZFIN"/>
</dbReference>
<dbReference type="GO" id="GO:0045944">
    <property type="term" value="P:positive regulation of transcription by RNA polymerase II"/>
    <property type="evidence" value="ECO:0000318"/>
    <property type="project" value="GO_Central"/>
</dbReference>
<dbReference type="GO" id="GO:0006355">
    <property type="term" value="P:regulation of DNA-templated transcription"/>
    <property type="evidence" value="ECO:0000314"/>
    <property type="project" value="ZFIN"/>
</dbReference>
<dbReference type="CDD" id="cd06955">
    <property type="entry name" value="NR_DBD_VDR"/>
    <property type="match status" value="1"/>
</dbReference>
<dbReference type="CDD" id="cd06933">
    <property type="entry name" value="NR_LBD_VDR"/>
    <property type="match status" value="1"/>
</dbReference>
<dbReference type="FunFam" id="3.30.50.10:FF:000023">
    <property type="entry name" value="Vitamin D3 receptor"/>
    <property type="match status" value="1"/>
</dbReference>
<dbReference type="FunFam" id="1.10.565.10:FF:000021">
    <property type="entry name" value="Vitamin D3 receptor B"/>
    <property type="match status" value="1"/>
</dbReference>
<dbReference type="Gene3D" id="3.30.50.10">
    <property type="entry name" value="Erythroid Transcription Factor GATA-1, subunit A"/>
    <property type="match status" value="1"/>
</dbReference>
<dbReference type="Gene3D" id="1.10.565.10">
    <property type="entry name" value="Retinoid X Receptor"/>
    <property type="match status" value="1"/>
</dbReference>
<dbReference type="IDEAL" id="IID50155"/>
<dbReference type="InterPro" id="IPR042153">
    <property type="entry name" value="DBD_VDR"/>
</dbReference>
<dbReference type="InterPro" id="IPR035500">
    <property type="entry name" value="NHR-like_dom_sf"/>
</dbReference>
<dbReference type="InterPro" id="IPR000536">
    <property type="entry name" value="Nucl_hrmn_rcpt_lig-bd"/>
</dbReference>
<dbReference type="InterPro" id="IPR050234">
    <property type="entry name" value="Nuclear_hormone_rcpt_NR1"/>
</dbReference>
<dbReference type="InterPro" id="IPR001723">
    <property type="entry name" value="Nuclear_hrmn_rcpt"/>
</dbReference>
<dbReference type="InterPro" id="IPR000324">
    <property type="entry name" value="VitD_rcpt"/>
</dbReference>
<dbReference type="InterPro" id="IPR001628">
    <property type="entry name" value="Znf_hrmn_rcpt"/>
</dbReference>
<dbReference type="InterPro" id="IPR013088">
    <property type="entry name" value="Znf_NHR/GATA"/>
</dbReference>
<dbReference type="PANTHER" id="PTHR24082">
    <property type="entry name" value="NUCLEAR HORMONE RECEPTOR"/>
    <property type="match status" value="1"/>
</dbReference>
<dbReference type="PANTHER" id="PTHR24082:SF38">
    <property type="entry name" value="VITAMIN D3 RECEPTOR"/>
    <property type="match status" value="1"/>
</dbReference>
<dbReference type="Pfam" id="PF00104">
    <property type="entry name" value="Hormone_recep"/>
    <property type="match status" value="1"/>
</dbReference>
<dbReference type="Pfam" id="PF00105">
    <property type="entry name" value="zf-C4"/>
    <property type="match status" value="1"/>
</dbReference>
<dbReference type="PRINTS" id="PR00398">
    <property type="entry name" value="STRDHORMONER"/>
</dbReference>
<dbReference type="PRINTS" id="PR00047">
    <property type="entry name" value="STROIDFINGER"/>
</dbReference>
<dbReference type="PRINTS" id="PR00350">
    <property type="entry name" value="VITAMINDR"/>
</dbReference>
<dbReference type="SMART" id="SM00430">
    <property type="entry name" value="HOLI"/>
    <property type="match status" value="1"/>
</dbReference>
<dbReference type="SMART" id="SM00399">
    <property type="entry name" value="ZnF_C4"/>
    <property type="match status" value="1"/>
</dbReference>
<dbReference type="SUPFAM" id="SSF57716">
    <property type="entry name" value="Glucocorticoid receptor-like (DNA-binding domain)"/>
    <property type="match status" value="1"/>
</dbReference>
<dbReference type="SUPFAM" id="SSF48508">
    <property type="entry name" value="Nuclear receptor ligand-binding domain"/>
    <property type="match status" value="1"/>
</dbReference>
<dbReference type="PROSITE" id="PS51843">
    <property type="entry name" value="NR_LBD"/>
    <property type="match status" value="1"/>
</dbReference>
<dbReference type="PROSITE" id="PS00031">
    <property type="entry name" value="NUCLEAR_REC_DBD_1"/>
    <property type="match status" value="1"/>
</dbReference>
<dbReference type="PROSITE" id="PS51030">
    <property type="entry name" value="NUCLEAR_REC_DBD_2"/>
    <property type="match status" value="1"/>
</dbReference>
<protein>
    <recommendedName>
        <fullName>Vitamin D3 receptor A</fullName>
        <shortName>VDR-A</shortName>
    </recommendedName>
    <alternativeName>
        <fullName>1,25-dihydroxyvitamin D3 receptor A</fullName>
    </alternativeName>
    <alternativeName>
        <fullName>Nuclear receptor subfamily 1 group I member 1-A</fullName>
    </alternativeName>
</protein>
<accession>Q9PTN2</accession>
<accession>B3DFZ0</accession>
<sequence length="453" mass="50867">MLTENSAVNSGGKSKCEAGACESRVNGDATSVMDLMAVSTSATGQDEFDRNAPRICGVCGDKATGFHFNAMTCEGCKGFFRRSMKRKASFTCPFNGNCTITKDNRRHCQACRLKRCIDIGMMKEFILTDEEVQRKKDLIMKRKEEEAAREARKPRLSDEQMQIINSLVEAHHKTYDDSYSDFVRFRPPVREGPVTRSASRAASLHSLSDASSDSFNHSPESVDTKLNFSNLLMMYQDSGSPDSSEEDQQSRLSMLPHLADLVSYSIQKVIGFAKMIPGFRDLTAEDQIALLKSSAIEIIMLRSNQSFSLEDMSWSCGGPDFKYCINDVTKAGHTLELLEPLVKFQVGLKKLKLHEEEHVLLMAICLLSPDRPGVQDHVRIEALQDRLCDVLQAYIRIQHPGGRLLYAKMIQKLADLRSLNEEHSKQYRSLSFQPEHSMQLTPLVLEVFGSEVS</sequence>
<proteinExistence type="evidence at protein level"/>
<evidence type="ECO:0000250" key="1">
    <source>
        <dbReference type="UniProtKB" id="P11473"/>
    </source>
</evidence>
<evidence type="ECO:0000250" key="2">
    <source>
        <dbReference type="UniProtKB" id="P13053"/>
    </source>
</evidence>
<evidence type="ECO:0000255" key="3">
    <source>
        <dbReference type="PROSITE-ProRule" id="PRU00407"/>
    </source>
</evidence>
<evidence type="ECO:0000255" key="4">
    <source>
        <dbReference type="PROSITE-ProRule" id="PRU01189"/>
    </source>
</evidence>
<evidence type="ECO:0000269" key="5">
    <source>
    </source>
</evidence>
<evidence type="ECO:0000269" key="6">
    <source>
    </source>
</evidence>
<evidence type="ECO:0000269" key="7">
    <source>
    </source>
</evidence>
<evidence type="ECO:0000305" key="8"/>
<evidence type="ECO:0007744" key="9">
    <source>
        <dbReference type="PDB" id="2HBH"/>
    </source>
</evidence>
<evidence type="ECO:0007744" key="10">
    <source>
        <dbReference type="PDB" id="2HC4"/>
    </source>
</evidence>
<evidence type="ECO:0007744" key="11">
    <source>
        <dbReference type="PDB" id="2HCD"/>
    </source>
</evidence>
<evidence type="ECO:0007829" key="12">
    <source>
        <dbReference type="PDB" id="2HBH"/>
    </source>
</evidence>
<evidence type="ECO:0007829" key="13">
    <source>
        <dbReference type="PDB" id="2HCD"/>
    </source>
</evidence>
<evidence type="ECO:0007829" key="14">
    <source>
        <dbReference type="PDB" id="4Q0A"/>
    </source>
</evidence>
<evidence type="ECO:0007829" key="15">
    <source>
        <dbReference type="PDB" id="6XZJ"/>
    </source>
</evidence>
<evidence type="ECO:0007829" key="16">
    <source>
        <dbReference type="PDB" id="7OXU"/>
    </source>
</evidence>
<evidence type="ECO:0007829" key="17">
    <source>
        <dbReference type="PDB" id="7OY4"/>
    </source>
</evidence>
<comment type="function">
    <text evidence="1">Nuclear receptor for calcitriol, the active form of vitamin D3 which mediates the action of this vitamin on cells. Enters the nucleus upon vitamin D3 binding where it forms heterodimers with the retinoid X receptor/RXR. The VDR-RXR heterodimers bind to specific response elements on DNA and activate the transcription of vitamin D3-responsive target genes. Recruited to promoters via its interaction with BAZ1B/WSTF which mediates the interaction with acetylated histones, an essential step for VDR-promoter association. Plays a central role in calcium homeostasis.</text>
</comment>
<comment type="subunit">
    <text evidence="1 5 6">Homodimer in the absence of bound vitamin D3. Heterodimer with RXRA after vitamin D3 binding (By similarity). Interacts with ncoa1 and possibly other coactivators, leading to a strong increase of transcription of target genes (PubMed:17218092, PubMed:17346665).</text>
</comment>
<comment type="subcellular location">
    <subcellularLocation>
        <location evidence="1 3">Nucleus</location>
    </subcellularLocation>
    <subcellularLocation>
        <location evidence="1">Cytoplasm</location>
    </subcellularLocation>
    <text evidence="1">Localizes mainly to the nucleus. Translocated into the nucleus via both ligand-dependent and ligand-independent pathways; ligand-independent nuclear translocation is mediated by IPO4.</text>
</comment>
<comment type="tissue specificity">
    <text evidence="7">Detected in embryo 24 to 48 hours after fertilization and in gastrula.</text>
</comment>
<comment type="domain">
    <text evidence="1">Composed of three domains: a modulating N-terminal domain, a DNA-binding domain and a C-terminal ligand-binding domain.</text>
</comment>
<comment type="domain">
    <text evidence="1">The 9aaTAD motif is a transactivation domain present in a large number of yeast and animal transcription factors.</text>
</comment>
<comment type="similarity">
    <text evidence="8">Belongs to the nuclear hormone receptor family. NR1 subfamily.</text>
</comment>
<keyword id="KW-0002">3D-structure</keyword>
<keyword id="KW-0963">Cytoplasm</keyword>
<keyword id="KW-0238">DNA-binding</keyword>
<keyword id="KW-0479">Metal-binding</keyword>
<keyword id="KW-0539">Nucleus</keyword>
<keyword id="KW-0675">Receptor</keyword>
<keyword id="KW-1185">Reference proteome</keyword>
<keyword id="KW-0804">Transcription</keyword>
<keyword id="KW-0805">Transcription regulation</keyword>
<keyword id="KW-0862">Zinc</keyword>
<keyword id="KW-0863">Zinc-finger</keyword>
<name>VDRA_DANRE</name>
<feature type="chain" id="PRO_0000337878" description="Vitamin D3 receptor A">
    <location>
        <begin position="1"/>
        <end position="453"/>
    </location>
</feature>
<feature type="domain" description="NR LBD" evidence="4">
    <location>
        <begin position="159"/>
        <end position="449"/>
    </location>
</feature>
<feature type="DNA-binding region" description="Nuclear receptor" evidence="3">
    <location>
        <begin position="53"/>
        <end position="128"/>
    </location>
</feature>
<feature type="zinc finger region" description="NR C4-type" evidence="3">
    <location>
        <begin position="56"/>
        <end position="76"/>
    </location>
</feature>
<feature type="zinc finger region" description="NR C4-type" evidence="3">
    <location>
        <begin position="92"/>
        <end position="111"/>
    </location>
</feature>
<feature type="region of interest" description="Hinge" evidence="1">
    <location>
        <begin position="129"/>
        <end position="158"/>
    </location>
</feature>
<feature type="region of interest" description="Interaction with coactivator LXXLL motif" evidence="2">
    <location>
        <begin position="274"/>
        <end position="292"/>
    </location>
</feature>
<feature type="short sequence motif" description="9aaTAD" evidence="1">
    <location>
        <begin position="442"/>
        <end position="450"/>
    </location>
</feature>
<feature type="binding site" evidence="1">
    <location>
        <position position="56"/>
    </location>
    <ligand>
        <name>Zn(2+)</name>
        <dbReference type="ChEBI" id="CHEBI:29105"/>
        <label>1</label>
    </ligand>
</feature>
<feature type="binding site" evidence="1">
    <location>
        <position position="59"/>
    </location>
    <ligand>
        <name>Zn(2+)</name>
        <dbReference type="ChEBI" id="CHEBI:29105"/>
        <label>1</label>
    </ligand>
</feature>
<feature type="binding site" evidence="1">
    <location>
        <position position="73"/>
    </location>
    <ligand>
        <name>Zn(2+)</name>
        <dbReference type="ChEBI" id="CHEBI:29105"/>
        <label>1</label>
    </ligand>
</feature>
<feature type="binding site" evidence="1">
    <location>
        <position position="76"/>
    </location>
    <ligand>
        <name>Zn(2+)</name>
        <dbReference type="ChEBI" id="CHEBI:29105"/>
        <label>1</label>
    </ligand>
</feature>
<feature type="binding site" evidence="1">
    <location>
        <position position="92"/>
    </location>
    <ligand>
        <name>Zn(2+)</name>
        <dbReference type="ChEBI" id="CHEBI:29105"/>
        <label>2</label>
    </ligand>
</feature>
<feature type="binding site" evidence="1">
    <location>
        <position position="98"/>
    </location>
    <ligand>
        <name>Zn(2+)</name>
        <dbReference type="ChEBI" id="CHEBI:29105"/>
        <label>2</label>
    </ligand>
</feature>
<feature type="binding site" evidence="1">
    <location>
        <position position="108"/>
    </location>
    <ligand>
        <name>Zn(2+)</name>
        <dbReference type="ChEBI" id="CHEBI:29105"/>
        <label>2</label>
    </ligand>
</feature>
<feature type="binding site" evidence="1">
    <location>
        <position position="111"/>
    </location>
    <ligand>
        <name>Zn(2+)</name>
        <dbReference type="ChEBI" id="CHEBI:29105"/>
        <label>2</label>
    </ligand>
</feature>
<feature type="binding site" evidence="5 10">
    <location>
        <position position="175"/>
    </location>
    <ligand>
        <name>calcitriol</name>
        <dbReference type="ChEBI" id="CHEBI:17823"/>
    </ligand>
</feature>
<feature type="binding site" evidence="5 10">
    <location>
        <position position="265"/>
    </location>
    <ligand>
        <name>calcitriol</name>
        <dbReference type="ChEBI" id="CHEBI:17823"/>
    </ligand>
</feature>
<feature type="binding site" evidence="5 10">
    <location>
        <position position="302"/>
    </location>
    <ligand>
        <name>calcitriol</name>
        <dbReference type="ChEBI" id="CHEBI:17823"/>
    </ligand>
</feature>
<feature type="binding site" evidence="5 10">
    <location>
        <position position="306"/>
    </location>
    <ligand>
        <name>calcitriol</name>
        <dbReference type="ChEBI" id="CHEBI:17823"/>
    </ligand>
</feature>
<feature type="binding site" evidence="5 10">
    <location>
        <position position="333"/>
    </location>
    <ligand>
        <name>calcitriol</name>
        <dbReference type="ChEBI" id="CHEBI:17823"/>
    </ligand>
</feature>
<feature type="binding site" evidence="5 10">
    <location>
        <position position="423"/>
    </location>
    <ligand>
        <name>calcitriol</name>
        <dbReference type="ChEBI" id="CHEBI:17823"/>
    </ligand>
</feature>
<feature type="sequence conflict" description="In Ref. 1; AAF21427." evidence="8" ref="1">
    <original>R</original>
    <variation>T</variation>
    <location>
        <position position="24"/>
    </location>
</feature>
<feature type="sequence conflict" description="In Ref. 1; AAF21427." evidence="8" ref="1">
    <original>V</original>
    <variation>L</variation>
    <location>
        <position position="32"/>
    </location>
</feature>
<feature type="sequence conflict" description="In Ref. 1; AAF21427." evidence="8" ref="1">
    <original>E</original>
    <variation>Q</variation>
    <location>
        <position position="47"/>
    </location>
</feature>
<feature type="sequence conflict" description="In Ref. 1; AAF21427." evidence="8" ref="1">
    <original>R</original>
    <variation>P</variation>
    <location>
        <position position="54"/>
    </location>
</feature>
<feature type="helix" evidence="14">
    <location>
        <begin position="158"/>
        <end position="174"/>
    </location>
</feature>
<feature type="helix" evidence="14">
    <location>
        <begin position="180"/>
        <end position="184"/>
    </location>
</feature>
<feature type="helix" evidence="14">
    <location>
        <begin position="255"/>
        <end position="274"/>
    </location>
</feature>
<feature type="turn" evidence="14">
    <location>
        <begin position="277"/>
        <end position="281"/>
    </location>
</feature>
<feature type="helix" evidence="14">
    <location>
        <begin position="284"/>
        <end position="302"/>
    </location>
</feature>
<feature type="helix" evidence="14">
    <location>
        <begin position="303"/>
        <end position="305"/>
    </location>
</feature>
<feature type="turn" evidence="14">
    <location>
        <begin position="309"/>
        <end position="312"/>
    </location>
</feature>
<feature type="strand" evidence="14">
    <location>
        <begin position="313"/>
        <end position="315"/>
    </location>
</feature>
<feature type="helix" evidence="14">
    <location>
        <begin position="319"/>
        <end position="321"/>
    </location>
</feature>
<feature type="strand" evidence="13">
    <location>
        <begin position="322"/>
        <end position="324"/>
    </location>
</feature>
<feature type="helix" evidence="14">
    <location>
        <begin position="325"/>
        <end position="328"/>
    </location>
</feature>
<feature type="turn" evidence="14">
    <location>
        <begin position="329"/>
        <end position="331"/>
    </location>
</feature>
<feature type="helix" evidence="14">
    <location>
        <begin position="335"/>
        <end position="349"/>
    </location>
</feature>
<feature type="turn" evidence="16">
    <location>
        <begin position="350"/>
        <end position="352"/>
    </location>
</feature>
<feature type="helix" evidence="14">
    <location>
        <begin position="355"/>
        <end position="366"/>
    </location>
</feature>
<feature type="strand" evidence="17">
    <location>
        <begin position="369"/>
        <end position="371"/>
    </location>
</feature>
<feature type="helix" evidence="14">
    <location>
        <begin position="377"/>
        <end position="398"/>
    </location>
</feature>
<feature type="strand" evidence="15">
    <location>
        <begin position="399"/>
        <end position="401"/>
    </location>
</feature>
<feature type="helix" evidence="12">
    <location>
        <begin position="402"/>
        <end position="404"/>
    </location>
</feature>
<feature type="helix" evidence="14">
    <location>
        <begin position="405"/>
        <end position="431"/>
    </location>
</feature>
<feature type="helix" evidence="14">
    <location>
        <begin position="434"/>
        <end position="437"/>
    </location>
</feature>
<feature type="helix" evidence="14">
    <location>
        <begin position="442"/>
        <end position="448"/>
    </location>
</feature>